<name>KATG_MYCSJ</name>
<accession>A3Q016</accession>
<gene>
    <name evidence="1" type="primary">katG</name>
    <name type="ordered locus">Mjls_2713</name>
</gene>
<proteinExistence type="inferred from homology"/>
<comment type="function">
    <text evidence="1">Bifunctional enzyme with both catalase and broad-spectrum peroxidase activity.</text>
</comment>
<comment type="catalytic activity">
    <reaction evidence="1">
        <text>H2O2 + AH2 = A + 2 H2O</text>
        <dbReference type="Rhea" id="RHEA:30275"/>
        <dbReference type="ChEBI" id="CHEBI:13193"/>
        <dbReference type="ChEBI" id="CHEBI:15377"/>
        <dbReference type="ChEBI" id="CHEBI:16240"/>
        <dbReference type="ChEBI" id="CHEBI:17499"/>
        <dbReference type="EC" id="1.11.1.21"/>
    </reaction>
</comment>
<comment type="catalytic activity">
    <reaction evidence="1">
        <text>2 H2O2 = O2 + 2 H2O</text>
        <dbReference type="Rhea" id="RHEA:20309"/>
        <dbReference type="ChEBI" id="CHEBI:15377"/>
        <dbReference type="ChEBI" id="CHEBI:15379"/>
        <dbReference type="ChEBI" id="CHEBI:16240"/>
        <dbReference type="EC" id="1.11.1.21"/>
    </reaction>
</comment>
<comment type="cofactor">
    <cofactor evidence="1">
        <name>heme b</name>
        <dbReference type="ChEBI" id="CHEBI:60344"/>
    </cofactor>
    <text evidence="1">Binds 1 heme b (iron(II)-protoporphyrin IX) group per dimer.</text>
</comment>
<comment type="subunit">
    <text evidence="1">Homodimer or homotetramer.</text>
</comment>
<comment type="PTM">
    <text evidence="1">Formation of the three residue Trp-Tyr-Met cross-link is important for the catalase, but not the peroxidase activity of the enzyme.</text>
</comment>
<comment type="similarity">
    <text evidence="1">Belongs to the peroxidase family. Peroxidase/catalase subfamily.</text>
</comment>
<dbReference type="EC" id="1.11.1.21" evidence="1"/>
<dbReference type="EMBL" id="CP000580">
    <property type="protein sequence ID" value="ABN98493.1"/>
    <property type="molecule type" value="Genomic_DNA"/>
</dbReference>
<dbReference type="SMR" id="A3Q016"/>
<dbReference type="KEGG" id="mjl:Mjls_2713"/>
<dbReference type="HOGENOM" id="CLU_025424_2_0_11"/>
<dbReference type="BioCyc" id="MSP164757:G1G8C-2732-MONOMER"/>
<dbReference type="GO" id="GO:0005829">
    <property type="term" value="C:cytosol"/>
    <property type="evidence" value="ECO:0007669"/>
    <property type="project" value="TreeGrafter"/>
</dbReference>
<dbReference type="GO" id="GO:0004096">
    <property type="term" value="F:catalase activity"/>
    <property type="evidence" value="ECO:0007669"/>
    <property type="project" value="UniProtKB-UniRule"/>
</dbReference>
<dbReference type="GO" id="GO:0020037">
    <property type="term" value="F:heme binding"/>
    <property type="evidence" value="ECO:0007669"/>
    <property type="project" value="InterPro"/>
</dbReference>
<dbReference type="GO" id="GO:0046872">
    <property type="term" value="F:metal ion binding"/>
    <property type="evidence" value="ECO:0007669"/>
    <property type="project" value="UniProtKB-KW"/>
</dbReference>
<dbReference type="GO" id="GO:0070301">
    <property type="term" value="P:cellular response to hydrogen peroxide"/>
    <property type="evidence" value="ECO:0007669"/>
    <property type="project" value="TreeGrafter"/>
</dbReference>
<dbReference type="GO" id="GO:0042744">
    <property type="term" value="P:hydrogen peroxide catabolic process"/>
    <property type="evidence" value="ECO:0007669"/>
    <property type="project" value="UniProtKB-KW"/>
</dbReference>
<dbReference type="CDD" id="cd08200">
    <property type="entry name" value="catalase_peroxidase_2"/>
    <property type="match status" value="1"/>
</dbReference>
<dbReference type="FunFam" id="1.10.420.10:FF:000004">
    <property type="entry name" value="Catalase-peroxidase"/>
    <property type="match status" value="1"/>
</dbReference>
<dbReference type="FunFam" id="1.10.520.10:FF:000002">
    <property type="entry name" value="Catalase-peroxidase"/>
    <property type="match status" value="1"/>
</dbReference>
<dbReference type="Gene3D" id="1.10.520.10">
    <property type="match status" value="2"/>
</dbReference>
<dbReference type="Gene3D" id="1.10.420.10">
    <property type="entry name" value="Peroxidase, domain 2"/>
    <property type="match status" value="2"/>
</dbReference>
<dbReference type="HAMAP" id="MF_01961">
    <property type="entry name" value="Catal_peroxid"/>
    <property type="match status" value="1"/>
</dbReference>
<dbReference type="InterPro" id="IPR000763">
    <property type="entry name" value="Catalase_peroxidase"/>
</dbReference>
<dbReference type="InterPro" id="IPR002016">
    <property type="entry name" value="Haem_peroxidase"/>
</dbReference>
<dbReference type="InterPro" id="IPR010255">
    <property type="entry name" value="Haem_peroxidase_sf"/>
</dbReference>
<dbReference type="InterPro" id="IPR019794">
    <property type="entry name" value="Peroxidases_AS"/>
</dbReference>
<dbReference type="InterPro" id="IPR019793">
    <property type="entry name" value="Peroxidases_heam-ligand_BS"/>
</dbReference>
<dbReference type="NCBIfam" id="TIGR00198">
    <property type="entry name" value="cat_per_HPI"/>
    <property type="match status" value="1"/>
</dbReference>
<dbReference type="NCBIfam" id="NF011635">
    <property type="entry name" value="PRK15061.1"/>
    <property type="match status" value="1"/>
</dbReference>
<dbReference type="PANTHER" id="PTHR30555:SF0">
    <property type="entry name" value="CATALASE-PEROXIDASE"/>
    <property type="match status" value="1"/>
</dbReference>
<dbReference type="PANTHER" id="PTHR30555">
    <property type="entry name" value="HYDROPEROXIDASE I, BIFUNCTIONAL CATALASE-PEROXIDASE"/>
    <property type="match status" value="1"/>
</dbReference>
<dbReference type="Pfam" id="PF00141">
    <property type="entry name" value="peroxidase"/>
    <property type="match status" value="2"/>
</dbReference>
<dbReference type="PRINTS" id="PR00460">
    <property type="entry name" value="BPEROXIDASE"/>
</dbReference>
<dbReference type="PRINTS" id="PR00458">
    <property type="entry name" value="PEROXIDASE"/>
</dbReference>
<dbReference type="SUPFAM" id="SSF48113">
    <property type="entry name" value="Heme-dependent peroxidases"/>
    <property type="match status" value="2"/>
</dbReference>
<dbReference type="PROSITE" id="PS00435">
    <property type="entry name" value="PEROXIDASE_1"/>
    <property type="match status" value="1"/>
</dbReference>
<dbReference type="PROSITE" id="PS00436">
    <property type="entry name" value="PEROXIDASE_2"/>
    <property type="match status" value="1"/>
</dbReference>
<dbReference type="PROSITE" id="PS50873">
    <property type="entry name" value="PEROXIDASE_4"/>
    <property type="match status" value="1"/>
</dbReference>
<sequence length="749" mass="82684">MSSDTSDTRPPHSDSGTQSNSESENPIIDSPEPKAHAPLTNKDWWPEQVDVSVLHKQNDKGNPLGEDFNYAEAFAQLDLEAFKRDVIEVIQTSQDWWPADYGNYAGLFIRMSWHAAGTYRIFDGRGGAGQGSQRFAPLNSWPDNANLDKARRLLWPIKQKYGNKISWADLIAYAGNAALEQSGFKTAGFAFGREDIWEPEEMLWGQEDTWLGTDKRYGGTNEDKRELAEPFGATTMGLIYVNPEGPEGKPDPLAAAHDIRETFGRMAMNDEETAALIVGGHTLGKTHGAADVNVGPEPEGAPIEEQGLGWKCPFGTGNANDTVTSGLEVIWTGTNSEWSNRYLEILYGNEWELTKSPAGAWQFEAKNAEATIPDPFGGPPRKPTMLVTDVSMREDPIYGQITRRWLDHPEEMDEAFAKAWYKLMHRDMGPISRYLGPWVAEPEIWQDPVPDVDHELVDESDIASLKSKVLESGLTVQQLVKTAWASASSFRGTDKRGGANGARVRLEPQRSWEGNEPAELAKVLPTLEQIQQDFNASASGGKKISLADLIVLAGSAAVEKAAKDAGYEIDVHFAPGRTDASQEQTDVESFAVLETKADGFRNYIRPGQKTSVEKLLVEKAYLLDLTAPEMTALLGGLRVLNVNHGGSKHGVFTNSPGALSNDFFVNLLDMNTAWKPSENTENVFEGRDRATGEIKWTATANDLVFGSNSVLRGIAEVYAQDDSKDKFVEDFVAAWVKVMNNDRFDLEKF</sequence>
<feature type="chain" id="PRO_0000354841" description="Catalase-peroxidase">
    <location>
        <begin position="1"/>
        <end position="749"/>
    </location>
</feature>
<feature type="region of interest" description="Disordered" evidence="2">
    <location>
        <begin position="1"/>
        <end position="40"/>
    </location>
</feature>
<feature type="compositionally biased region" description="Basic and acidic residues" evidence="2">
    <location>
        <begin position="1"/>
        <end position="12"/>
    </location>
</feature>
<feature type="compositionally biased region" description="Polar residues" evidence="2">
    <location>
        <begin position="14"/>
        <end position="24"/>
    </location>
</feature>
<feature type="active site" description="Proton acceptor" evidence="1">
    <location>
        <position position="114"/>
    </location>
</feature>
<feature type="binding site" description="axial binding residue" evidence="1">
    <location>
        <position position="281"/>
    </location>
    <ligand>
        <name>heme b</name>
        <dbReference type="ChEBI" id="CHEBI:60344"/>
    </ligand>
    <ligandPart>
        <name>Fe</name>
        <dbReference type="ChEBI" id="CHEBI:18248"/>
    </ligandPart>
</feature>
<feature type="site" description="Transition state stabilizer" evidence="1">
    <location>
        <position position="110"/>
    </location>
</feature>
<feature type="cross-link" description="Tryptophyl-tyrosyl-methioninium (Trp-Tyr) (with M-266)" evidence="1">
    <location>
        <begin position="113"/>
        <end position="240"/>
    </location>
</feature>
<feature type="cross-link" description="Tryptophyl-tyrosyl-methioninium (Tyr-Met) (with W-113)" evidence="1">
    <location>
        <begin position="240"/>
        <end position="266"/>
    </location>
</feature>
<reference key="1">
    <citation type="submission" date="2007-02" db="EMBL/GenBank/DDBJ databases">
        <title>Complete sequence of Mycobacterium sp. JLS.</title>
        <authorList>
            <consortium name="US DOE Joint Genome Institute"/>
            <person name="Copeland A."/>
            <person name="Lucas S."/>
            <person name="Lapidus A."/>
            <person name="Barry K."/>
            <person name="Detter J.C."/>
            <person name="Glavina del Rio T."/>
            <person name="Hammon N."/>
            <person name="Israni S."/>
            <person name="Dalin E."/>
            <person name="Tice H."/>
            <person name="Pitluck S."/>
            <person name="Chain P."/>
            <person name="Malfatti S."/>
            <person name="Shin M."/>
            <person name="Vergez L."/>
            <person name="Schmutz J."/>
            <person name="Larimer F."/>
            <person name="Land M."/>
            <person name="Hauser L."/>
            <person name="Kyrpides N."/>
            <person name="Mikhailova N."/>
            <person name="Miller C.D."/>
            <person name="Anderson A.J."/>
            <person name="Sims R.C."/>
            <person name="Richardson P."/>
        </authorList>
    </citation>
    <scope>NUCLEOTIDE SEQUENCE [LARGE SCALE GENOMIC DNA]</scope>
    <source>
        <strain>JLS</strain>
    </source>
</reference>
<evidence type="ECO:0000255" key="1">
    <source>
        <dbReference type="HAMAP-Rule" id="MF_01961"/>
    </source>
</evidence>
<evidence type="ECO:0000256" key="2">
    <source>
        <dbReference type="SAM" id="MobiDB-lite"/>
    </source>
</evidence>
<protein>
    <recommendedName>
        <fullName evidence="1">Catalase-peroxidase</fullName>
        <shortName evidence="1">CP</shortName>
        <ecNumber evidence="1">1.11.1.21</ecNumber>
    </recommendedName>
    <alternativeName>
        <fullName evidence="1">Peroxidase/catalase</fullName>
    </alternativeName>
</protein>
<keyword id="KW-0349">Heme</keyword>
<keyword id="KW-0376">Hydrogen peroxide</keyword>
<keyword id="KW-0408">Iron</keyword>
<keyword id="KW-0479">Metal-binding</keyword>
<keyword id="KW-0560">Oxidoreductase</keyword>
<keyword id="KW-0575">Peroxidase</keyword>
<organism>
    <name type="scientific">Mycobacterium sp. (strain JLS)</name>
    <dbReference type="NCBI Taxonomy" id="164757"/>
    <lineage>
        <taxon>Bacteria</taxon>
        <taxon>Bacillati</taxon>
        <taxon>Actinomycetota</taxon>
        <taxon>Actinomycetes</taxon>
        <taxon>Mycobacteriales</taxon>
        <taxon>Mycobacteriaceae</taxon>
        <taxon>Mycobacterium</taxon>
    </lineage>
</organism>